<evidence type="ECO:0000250" key="1"/>
<evidence type="ECO:0000255" key="2"/>
<evidence type="ECO:0000255" key="3">
    <source>
        <dbReference type="PROSITE-ProRule" id="PRU01172"/>
    </source>
</evidence>
<evidence type="ECO:0000269" key="4">
    <source>
    </source>
</evidence>
<evidence type="ECO:0000269" key="5">
    <source>
    </source>
</evidence>
<evidence type="ECO:0000305" key="6"/>
<evidence type="ECO:0000312" key="7">
    <source>
        <dbReference type="EMBL" id="AAF21665.1"/>
    </source>
</evidence>
<protein>
    <recommendedName>
        <fullName>Jeltraxin</fullName>
    </recommendedName>
    <alternativeName>
        <fullName>Egg jelly pentraxin</fullName>
    </alternativeName>
</protein>
<dbReference type="EMBL" id="AF047712">
    <property type="protein sequence ID" value="AAF21665.1"/>
    <property type="molecule type" value="mRNA"/>
</dbReference>
<dbReference type="SMR" id="Q9PTT2"/>
<dbReference type="GlyCosmos" id="Q9PTT2">
    <property type="glycosylation" value="2 sites, No reported glycans"/>
</dbReference>
<dbReference type="GO" id="GO:0005576">
    <property type="term" value="C:extracellular region"/>
    <property type="evidence" value="ECO:0000314"/>
    <property type="project" value="UniProtKB"/>
</dbReference>
<dbReference type="GO" id="GO:0030246">
    <property type="term" value="F:carbohydrate binding"/>
    <property type="evidence" value="ECO:0007669"/>
    <property type="project" value="UniProtKB-KW"/>
</dbReference>
<dbReference type="GO" id="GO:0016936">
    <property type="term" value="F:galactoside binding"/>
    <property type="evidence" value="ECO:0000314"/>
    <property type="project" value="UniProtKB"/>
</dbReference>
<dbReference type="GO" id="GO:0046872">
    <property type="term" value="F:metal ion binding"/>
    <property type="evidence" value="ECO:0007669"/>
    <property type="project" value="UniProtKB-KW"/>
</dbReference>
<dbReference type="CDD" id="cd00152">
    <property type="entry name" value="PTX"/>
    <property type="match status" value="1"/>
</dbReference>
<dbReference type="FunFam" id="2.60.120.200:FF:000070">
    <property type="entry name" value="Serum amyloid P-component"/>
    <property type="match status" value="1"/>
</dbReference>
<dbReference type="Gene3D" id="2.60.120.200">
    <property type="match status" value="1"/>
</dbReference>
<dbReference type="InterPro" id="IPR013320">
    <property type="entry name" value="ConA-like_dom_sf"/>
</dbReference>
<dbReference type="InterPro" id="IPR001759">
    <property type="entry name" value="Pentraxin-related"/>
</dbReference>
<dbReference type="InterPro" id="IPR051005">
    <property type="entry name" value="Pentraxin_domain"/>
</dbReference>
<dbReference type="PANTHER" id="PTHR45869:SF7">
    <property type="entry name" value="C-REACTIVE PROTEIN"/>
    <property type="match status" value="1"/>
</dbReference>
<dbReference type="PANTHER" id="PTHR45869">
    <property type="entry name" value="C-REACTIVE PROTEIN-RELATED"/>
    <property type="match status" value="1"/>
</dbReference>
<dbReference type="Pfam" id="PF00354">
    <property type="entry name" value="Pentaxin"/>
    <property type="match status" value="1"/>
</dbReference>
<dbReference type="PRINTS" id="PR00895">
    <property type="entry name" value="PENTAXIN"/>
</dbReference>
<dbReference type="SMART" id="SM00159">
    <property type="entry name" value="PTX"/>
    <property type="match status" value="1"/>
</dbReference>
<dbReference type="SUPFAM" id="SSF49899">
    <property type="entry name" value="Concanavalin A-like lectins/glucanases"/>
    <property type="match status" value="1"/>
</dbReference>
<dbReference type="PROSITE" id="PS51828">
    <property type="entry name" value="PTX_2"/>
    <property type="match status" value="1"/>
</dbReference>
<gene>
    <name evidence="7" type="primary">PXN1</name>
</gene>
<proteinExistence type="evidence at protein level"/>
<comment type="function">
    <text evidence="4">Calcium-dependent beta-galactose specific lectin.</text>
</comment>
<comment type="cofactor">
    <cofactor evidence="1">
        <name>Ca(2+)</name>
        <dbReference type="ChEBI" id="CHEBI:29108"/>
    </cofactor>
    <text evidence="1">Binds 2 calcium ions per subunit.</text>
</comment>
<comment type="subunit">
    <text evidence="5">Homodecamer consisting of two homopentamer units. Pentraxin (or pentaxin) have a discoid arrangement of 5 non-covalently bound subunits.</text>
</comment>
<comment type="subcellular location">
    <subcellularLocation>
        <location evidence="4">Secreted</location>
    </subcellularLocation>
</comment>
<comment type="tissue specificity">
    <text evidence="4">Oviduct. Highest expression levels were detected in the pars convoluta with lower levels detected in the pars recta. No expression was detected in the pars uterina.</text>
</comment>
<comment type="PTM">
    <text evidence="5">Glycosylated.</text>
</comment>
<comment type="mass spectrometry" mass="27696.0" method="MALDI" evidence="4"/>
<comment type="similarity">
    <text evidence="6">Belongs to the pentraxin family.</text>
</comment>
<name>JELT_LEPLA</name>
<sequence length="225" mass="25618">MKGLVIFFCLFYGCHVAGATGKTIMLFPQKTDTDYVTLKPTERVLNQITVCLKSYTELIKEHSLFSLAMQGSGKDNTLLIYPYPPNNISISIHNEDIYFKVDPEVLQWKRTCVTWDSKTGLLQLWINGKLYPRRITKSRSPIGPQISVILGQEQDSYGGSFDINQAFVGEMSDVNVWDYVLPPENIKAYFSDDYTLDGNFYSWDGGNYTINGLIVVLRNQFIPKL</sequence>
<feature type="signal peptide" evidence="4 5">
    <location>
        <begin position="1"/>
        <end position="19"/>
    </location>
</feature>
<feature type="chain" id="PRO_0000023555" description="Jeltraxin" evidence="4">
    <location>
        <begin position="20"/>
        <end position="225"/>
    </location>
</feature>
<feature type="domain" description="Pentraxin (PTX)" evidence="3">
    <location>
        <begin position="21"/>
        <end position="223"/>
    </location>
</feature>
<feature type="binding site" evidence="1">
    <location>
        <position position="75"/>
    </location>
    <ligand>
        <name>Ca(2+)</name>
        <dbReference type="ChEBI" id="CHEBI:29108"/>
        <label>1</label>
    </ligand>
</feature>
<feature type="binding site" evidence="1">
    <location>
        <position position="76"/>
    </location>
    <ligand>
        <name>Ca(2+)</name>
        <dbReference type="ChEBI" id="CHEBI:29108"/>
        <label>1</label>
    </ligand>
</feature>
<feature type="binding site" evidence="1">
    <location>
        <position position="153"/>
    </location>
    <ligand>
        <name>Ca(2+)</name>
        <dbReference type="ChEBI" id="CHEBI:29108"/>
        <label>1</label>
    </ligand>
</feature>
<feature type="binding site" evidence="3">
    <location>
        <position position="153"/>
    </location>
    <ligand>
        <name>Ca(2+)</name>
        <dbReference type="ChEBI" id="CHEBI:29108"/>
        <label>2</label>
    </ligand>
</feature>
<feature type="binding site" evidence="1">
    <location>
        <position position="154"/>
    </location>
    <ligand>
        <name>Ca(2+)</name>
        <dbReference type="ChEBI" id="CHEBI:29108"/>
        <label>1</label>
    </ligand>
</feature>
<feature type="binding site" evidence="1">
    <location>
        <position position="155"/>
    </location>
    <ligand>
        <name>Ca(2+)</name>
        <dbReference type="ChEBI" id="CHEBI:29108"/>
        <label>1</label>
    </ligand>
</feature>
<feature type="binding site" evidence="3">
    <location>
        <position position="155"/>
    </location>
    <ligand>
        <name>Ca(2+)</name>
        <dbReference type="ChEBI" id="CHEBI:29108"/>
        <label>2</label>
    </ligand>
</feature>
<feature type="binding site" evidence="3">
    <location>
        <position position="165"/>
    </location>
    <ligand>
        <name>Ca(2+)</name>
        <dbReference type="ChEBI" id="CHEBI:29108"/>
        <label>2</label>
    </ligand>
</feature>
<feature type="glycosylation site" description="N-linked (GlcNAc...) asparagine" evidence="2">
    <location>
        <position position="87"/>
    </location>
</feature>
<feature type="glycosylation site" description="N-linked (GlcNAc...) asparagine" evidence="2">
    <location>
        <position position="207"/>
    </location>
</feature>
<feature type="disulfide bond" evidence="3">
    <location>
        <begin position="51"/>
        <end position="112"/>
    </location>
</feature>
<reference evidence="6 7" key="1">
    <citation type="journal article" date="2003" name="Biochemistry">
        <title>Jeltraxin, a frog egg jelly glycoprotein, has calcium-dependent lectin properties and is related to human serum pentraxins CRP and SAP.</title>
        <authorList>
            <person name="Peavy T.R."/>
            <person name="Hernandez C."/>
            <person name="Carroll E.J. Jr."/>
        </authorList>
    </citation>
    <scope>NUCLEOTIDE SEQUENCE [MRNA]</scope>
    <scope>PROTEIN SEQUENCE OF 20-33; 75-89; 101-109 AND 120-129</scope>
    <scope>SUBCELLULAR LOCATION</scope>
    <scope>TISSUE SPECIFICITY</scope>
    <scope>MASS SPECTROMETRY</scope>
    <source>
        <tissue evidence="4">Egg jelly</tissue>
        <tissue evidence="7">Oviduct</tissue>
    </source>
</reference>
<reference evidence="6" key="2">
    <citation type="journal article" date="1991" name="Arch. Biochem. Biophys.">
        <title>Purification, physicochemical characterization, and immunohistochemical localization of a major 11.7 S glycoprotein from the jelly coats of the anuran Lepidobatrachus laevis.</title>
        <authorList>
            <person name="Carroll E.J. Jr."/>
            <person name="Wei S.H."/>
            <person name="Nagel G.M."/>
        </authorList>
    </citation>
    <scope>PROTEIN SEQUENCE OF 20-39</scope>
    <scope>SUBUNIT</scope>
    <scope>GLYCOSYLATION</scope>
    <source>
        <tissue evidence="5">Egg jelly</tissue>
    </source>
</reference>
<organism>
    <name type="scientific">Lepidobatrachus laevis</name>
    <name type="common">Budgett's frog</name>
    <dbReference type="NCBI Taxonomy" id="8376"/>
    <lineage>
        <taxon>Eukaryota</taxon>
        <taxon>Metazoa</taxon>
        <taxon>Chordata</taxon>
        <taxon>Craniata</taxon>
        <taxon>Vertebrata</taxon>
        <taxon>Euteleostomi</taxon>
        <taxon>Amphibia</taxon>
        <taxon>Batrachia</taxon>
        <taxon>Anura</taxon>
        <taxon>Neobatrachia</taxon>
        <taxon>Hyloidea</taxon>
        <taxon>Ceratophryidae</taxon>
        <taxon>Ceratophryinae</taxon>
        <taxon>Lepidobatrachus</taxon>
    </lineage>
</organism>
<keyword id="KW-0106">Calcium</keyword>
<keyword id="KW-0903">Direct protein sequencing</keyword>
<keyword id="KW-1015">Disulfide bond</keyword>
<keyword id="KW-0325">Glycoprotein</keyword>
<keyword id="KW-0430">Lectin</keyword>
<keyword id="KW-0479">Metal-binding</keyword>
<keyword id="KW-0964">Secreted</keyword>
<keyword id="KW-0732">Signal</keyword>
<accession>Q9PTT2</accession>